<gene>
    <name evidence="1" type="primary">lpxA</name>
    <name type="ordered locus">RSc1416</name>
    <name type="ORF">RS05276</name>
</gene>
<dbReference type="EC" id="2.3.1.129" evidence="1"/>
<dbReference type="EMBL" id="AL646052">
    <property type="protein sequence ID" value="CAD15118.1"/>
    <property type="molecule type" value="Genomic_DNA"/>
</dbReference>
<dbReference type="RefSeq" id="WP_011001365.1">
    <property type="nucleotide sequence ID" value="NC_003295.1"/>
</dbReference>
<dbReference type="SMR" id="Q8XZH9"/>
<dbReference type="STRING" id="267608.RSc1416"/>
<dbReference type="EnsemblBacteria" id="CAD15118">
    <property type="protein sequence ID" value="CAD15118"/>
    <property type="gene ID" value="RSc1416"/>
</dbReference>
<dbReference type="KEGG" id="rso:RSc1416"/>
<dbReference type="eggNOG" id="COG1043">
    <property type="taxonomic scope" value="Bacteria"/>
</dbReference>
<dbReference type="HOGENOM" id="CLU_061249_0_0_4"/>
<dbReference type="UniPathway" id="UPA00359">
    <property type="reaction ID" value="UER00477"/>
</dbReference>
<dbReference type="Proteomes" id="UP000001436">
    <property type="component" value="Chromosome"/>
</dbReference>
<dbReference type="GO" id="GO:0005737">
    <property type="term" value="C:cytoplasm"/>
    <property type="evidence" value="ECO:0007669"/>
    <property type="project" value="UniProtKB-SubCell"/>
</dbReference>
<dbReference type="GO" id="GO:0016020">
    <property type="term" value="C:membrane"/>
    <property type="evidence" value="ECO:0007669"/>
    <property type="project" value="GOC"/>
</dbReference>
<dbReference type="GO" id="GO:0008780">
    <property type="term" value="F:acyl-[acyl-carrier-protein]-UDP-N-acetylglucosamine O-acyltransferase activity"/>
    <property type="evidence" value="ECO:0007669"/>
    <property type="project" value="UniProtKB-UniRule"/>
</dbReference>
<dbReference type="GO" id="GO:0009245">
    <property type="term" value="P:lipid A biosynthetic process"/>
    <property type="evidence" value="ECO:0007669"/>
    <property type="project" value="UniProtKB-UniRule"/>
</dbReference>
<dbReference type="CDD" id="cd03351">
    <property type="entry name" value="LbH_UDP-GlcNAc_AT"/>
    <property type="match status" value="1"/>
</dbReference>
<dbReference type="Gene3D" id="2.160.10.10">
    <property type="entry name" value="Hexapeptide repeat proteins"/>
    <property type="match status" value="1"/>
</dbReference>
<dbReference type="Gene3D" id="1.20.1180.10">
    <property type="entry name" value="Udp N-acetylglucosamine O-acyltransferase, C-terminal domain"/>
    <property type="match status" value="1"/>
</dbReference>
<dbReference type="HAMAP" id="MF_00387">
    <property type="entry name" value="LpxA"/>
    <property type="match status" value="1"/>
</dbReference>
<dbReference type="InterPro" id="IPR029098">
    <property type="entry name" value="Acetyltransf_C"/>
</dbReference>
<dbReference type="InterPro" id="IPR037157">
    <property type="entry name" value="Acetyltransf_C_sf"/>
</dbReference>
<dbReference type="InterPro" id="IPR001451">
    <property type="entry name" value="Hexapep"/>
</dbReference>
<dbReference type="InterPro" id="IPR018357">
    <property type="entry name" value="Hexapep_transf_CS"/>
</dbReference>
<dbReference type="InterPro" id="IPR010137">
    <property type="entry name" value="Lipid_A_LpxA"/>
</dbReference>
<dbReference type="InterPro" id="IPR011004">
    <property type="entry name" value="Trimer_LpxA-like_sf"/>
</dbReference>
<dbReference type="NCBIfam" id="TIGR01852">
    <property type="entry name" value="lipid_A_lpxA"/>
    <property type="match status" value="1"/>
</dbReference>
<dbReference type="NCBIfam" id="NF003657">
    <property type="entry name" value="PRK05289.1"/>
    <property type="match status" value="1"/>
</dbReference>
<dbReference type="PANTHER" id="PTHR43480">
    <property type="entry name" value="ACYL-[ACYL-CARRIER-PROTEIN]--UDP-N-ACETYLGLUCOSAMINE O-ACYLTRANSFERASE"/>
    <property type="match status" value="1"/>
</dbReference>
<dbReference type="PANTHER" id="PTHR43480:SF1">
    <property type="entry name" value="ACYL-[ACYL-CARRIER-PROTEIN]--UDP-N-ACETYLGLUCOSAMINE O-ACYLTRANSFERASE, MITOCHONDRIAL-RELATED"/>
    <property type="match status" value="1"/>
</dbReference>
<dbReference type="Pfam" id="PF13720">
    <property type="entry name" value="Acetyltransf_11"/>
    <property type="match status" value="1"/>
</dbReference>
<dbReference type="Pfam" id="PF00132">
    <property type="entry name" value="Hexapep"/>
    <property type="match status" value="1"/>
</dbReference>
<dbReference type="PIRSF" id="PIRSF000456">
    <property type="entry name" value="UDP-GlcNAc_acltr"/>
    <property type="match status" value="1"/>
</dbReference>
<dbReference type="SUPFAM" id="SSF51161">
    <property type="entry name" value="Trimeric LpxA-like enzymes"/>
    <property type="match status" value="1"/>
</dbReference>
<dbReference type="PROSITE" id="PS00101">
    <property type="entry name" value="HEXAPEP_TRANSFERASES"/>
    <property type="match status" value="1"/>
</dbReference>
<organism>
    <name type="scientific">Ralstonia nicotianae (strain ATCC BAA-1114 / GMI1000)</name>
    <name type="common">Ralstonia solanacearum</name>
    <dbReference type="NCBI Taxonomy" id="267608"/>
    <lineage>
        <taxon>Bacteria</taxon>
        <taxon>Pseudomonadati</taxon>
        <taxon>Pseudomonadota</taxon>
        <taxon>Betaproteobacteria</taxon>
        <taxon>Burkholderiales</taxon>
        <taxon>Burkholderiaceae</taxon>
        <taxon>Ralstonia</taxon>
        <taxon>Ralstonia solanacearum species complex</taxon>
    </lineage>
</organism>
<accession>Q8XZH9</accession>
<comment type="function">
    <text evidence="1">Involved in the biosynthesis of lipid A, a phosphorylated glycolipid that anchors the lipopolysaccharide to the outer membrane of the cell.</text>
</comment>
<comment type="catalytic activity">
    <reaction evidence="1">
        <text>a (3R)-hydroxyacyl-[ACP] + UDP-N-acetyl-alpha-D-glucosamine = a UDP-3-O-[(3R)-3-hydroxyacyl]-N-acetyl-alpha-D-glucosamine + holo-[ACP]</text>
        <dbReference type="Rhea" id="RHEA:67812"/>
        <dbReference type="Rhea" id="RHEA-COMP:9685"/>
        <dbReference type="Rhea" id="RHEA-COMP:9945"/>
        <dbReference type="ChEBI" id="CHEBI:57705"/>
        <dbReference type="ChEBI" id="CHEBI:64479"/>
        <dbReference type="ChEBI" id="CHEBI:78827"/>
        <dbReference type="ChEBI" id="CHEBI:173225"/>
        <dbReference type="EC" id="2.3.1.129"/>
    </reaction>
</comment>
<comment type="pathway">
    <text evidence="1">Glycolipid biosynthesis; lipid IV(A) biosynthesis; lipid IV(A) from (3R)-3-hydroxytetradecanoyl-[acyl-carrier-protein] and UDP-N-acetyl-alpha-D-glucosamine: step 1/6.</text>
</comment>
<comment type="subunit">
    <text evidence="1">Homotrimer.</text>
</comment>
<comment type="subcellular location">
    <subcellularLocation>
        <location evidence="1">Cytoplasm</location>
    </subcellularLocation>
</comment>
<comment type="similarity">
    <text evidence="1">Belongs to the transferase hexapeptide repeat family. LpxA subfamily.</text>
</comment>
<sequence length="271" mass="29052">MTQVQKIHPTAVIDPQAELAPDVEVGAFTVIGPNVRIDSGTRIGHHTVVEGYTTLGRDNQIGHFASVGGRPQDMKYRDEPTRLIVGDRNTIREFTTIHTGTAQDVGITSIGDDNWIMAYVHIAHDCRIGNHTVFSSNAQIAGHVEVGDWAILGGMSGVHQFVRIGAHAMLGGASALVQDVPPFVIAASDKGGNKAAPHGVNVVGLQRRGFSAEQIAGLRQAYKLLYKSDLSFDQAQAEIAAQVAQTEDAPSREALRTFADFIAATKRGIVR</sequence>
<feature type="chain" id="PRO_0000188061" description="Acyl-[acyl-carrier-protein]--UDP-N-acetylglucosamine O-acyltransferase">
    <location>
        <begin position="1"/>
        <end position="271"/>
    </location>
</feature>
<proteinExistence type="inferred from homology"/>
<keyword id="KW-0012">Acyltransferase</keyword>
<keyword id="KW-0963">Cytoplasm</keyword>
<keyword id="KW-0441">Lipid A biosynthesis</keyword>
<keyword id="KW-0444">Lipid biosynthesis</keyword>
<keyword id="KW-0443">Lipid metabolism</keyword>
<keyword id="KW-1185">Reference proteome</keyword>
<keyword id="KW-0677">Repeat</keyword>
<keyword id="KW-0808">Transferase</keyword>
<evidence type="ECO:0000255" key="1">
    <source>
        <dbReference type="HAMAP-Rule" id="MF_00387"/>
    </source>
</evidence>
<name>LPXA_RALN1</name>
<reference key="1">
    <citation type="journal article" date="2002" name="Nature">
        <title>Genome sequence of the plant pathogen Ralstonia solanacearum.</title>
        <authorList>
            <person name="Salanoubat M."/>
            <person name="Genin S."/>
            <person name="Artiguenave F."/>
            <person name="Gouzy J."/>
            <person name="Mangenot S."/>
            <person name="Arlat M."/>
            <person name="Billault A."/>
            <person name="Brottier P."/>
            <person name="Camus J.-C."/>
            <person name="Cattolico L."/>
            <person name="Chandler M."/>
            <person name="Choisne N."/>
            <person name="Claudel-Renard C."/>
            <person name="Cunnac S."/>
            <person name="Demange N."/>
            <person name="Gaspin C."/>
            <person name="Lavie M."/>
            <person name="Moisan A."/>
            <person name="Robert C."/>
            <person name="Saurin W."/>
            <person name="Schiex T."/>
            <person name="Siguier P."/>
            <person name="Thebault P."/>
            <person name="Whalen M."/>
            <person name="Wincker P."/>
            <person name="Levy M."/>
            <person name="Weissenbach J."/>
            <person name="Boucher C.A."/>
        </authorList>
    </citation>
    <scope>NUCLEOTIDE SEQUENCE [LARGE SCALE GENOMIC DNA]</scope>
    <source>
        <strain>ATCC BAA-1114 / GMI1000</strain>
    </source>
</reference>
<protein>
    <recommendedName>
        <fullName evidence="1">Acyl-[acyl-carrier-protein]--UDP-N-acetylglucosamine O-acyltransferase</fullName>
        <shortName evidence="1">UDP-N-acetylglucosamine acyltransferase</shortName>
        <ecNumber evidence="1">2.3.1.129</ecNumber>
    </recommendedName>
</protein>